<feature type="chain" id="PRO_0000270679" description="Large ribosomal subunit protein bL21">
    <location>
        <begin position="1"/>
        <end position="102"/>
    </location>
</feature>
<comment type="function">
    <text evidence="1">This protein binds to 23S rRNA in the presence of protein L20.</text>
</comment>
<comment type="subunit">
    <text evidence="1">Part of the 50S ribosomal subunit. Contacts protein L20.</text>
</comment>
<comment type="similarity">
    <text evidence="1">Belongs to the bacterial ribosomal protein bL21 family.</text>
</comment>
<dbReference type="EMBL" id="AM180252">
    <property type="protein sequence ID" value="CAJ54677.1"/>
    <property type="molecule type" value="Genomic_DNA"/>
</dbReference>
<dbReference type="RefSeq" id="WP_011526706.1">
    <property type="nucleotide sequence ID" value="NC_008011.1"/>
</dbReference>
<dbReference type="SMR" id="Q1MQQ0"/>
<dbReference type="STRING" id="363253.LI0623"/>
<dbReference type="KEGG" id="lip:LI0623"/>
<dbReference type="eggNOG" id="COG0261">
    <property type="taxonomic scope" value="Bacteria"/>
</dbReference>
<dbReference type="HOGENOM" id="CLU_061463_3_2_7"/>
<dbReference type="OrthoDB" id="9813334at2"/>
<dbReference type="Proteomes" id="UP000002430">
    <property type="component" value="Chromosome"/>
</dbReference>
<dbReference type="GO" id="GO:0005737">
    <property type="term" value="C:cytoplasm"/>
    <property type="evidence" value="ECO:0007669"/>
    <property type="project" value="UniProtKB-ARBA"/>
</dbReference>
<dbReference type="GO" id="GO:1990904">
    <property type="term" value="C:ribonucleoprotein complex"/>
    <property type="evidence" value="ECO:0007669"/>
    <property type="project" value="UniProtKB-KW"/>
</dbReference>
<dbReference type="GO" id="GO:0005840">
    <property type="term" value="C:ribosome"/>
    <property type="evidence" value="ECO:0007669"/>
    <property type="project" value="UniProtKB-KW"/>
</dbReference>
<dbReference type="GO" id="GO:0019843">
    <property type="term" value="F:rRNA binding"/>
    <property type="evidence" value="ECO:0007669"/>
    <property type="project" value="UniProtKB-UniRule"/>
</dbReference>
<dbReference type="GO" id="GO:0003735">
    <property type="term" value="F:structural constituent of ribosome"/>
    <property type="evidence" value="ECO:0007669"/>
    <property type="project" value="InterPro"/>
</dbReference>
<dbReference type="GO" id="GO:0006412">
    <property type="term" value="P:translation"/>
    <property type="evidence" value="ECO:0007669"/>
    <property type="project" value="UniProtKB-UniRule"/>
</dbReference>
<dbReference type="HAMAP" id="MF_01363">
    <property type="entry name" value="Ribosomal_bL21"/>
    <property type="match status" value="1"/>
</dbReference>
<dbReference type="InterPro" id="IPR028909">
    <property type="entry name" value="bL21-like"/>
</dbReference>
<dbReference type="InterPro" id="IPR036164">
    <property type="entry name" value="bL21-like_sf"/>
</dbReference>
<dbReference type="InterPro" id="IPR001787">
    <property type="entry name" value="Ribosomal_bL21"/>
</dbReference>
<dbReference type="NCBIfam" id="TIGR00061">
    <property type="entry name" value="L21"/>
    <property type="match status" value="1"/>
</dbReference>
<dbReference type="PANTHER" id="PTHR21349">
    <property type="entry name" value="50S RIBOSOMAL PROTEIN L21"/>
    <property type="match status" value="1"/>
</dbReference>
<dbReference type="PANTHER" id="PTHR21349:SF0">
    <property type="entry name" value="LARGE RIBOSOMAL SUBUNIT PROTEIN BL21M"/>
    <property type="match status" value="1"/>
</dbReference>
<dbReference type="Pfam" id="PF00829">
    <property type="entry name" value="Ribosomal_L21p"/>
    <property type="match status" value="1"/>
</dbReference>
<dbReference type="SUPFAM" id="SSF141091">
    <property type="entry name" value="L21p-like"/>
    <property type="match status" value="1"/>
</dbReference>
<sequence>MYAIIEAGGKQFCVEEGSKIFVSKIDAEVGTEIFFDKIFMIGGSSPQIGTPYINNAKVIAKVLEHGRDKKILVFKKWRRNDSRKLQGHRQDYTALKVTGIQL</sequence>
<evidence type="ECO:0000255" key="1">
    <source>
        <dbReference type="HAMAP-Rule" id="MF_01363"/>
    </source>
</evidence>
<evidence type="ECO:0000305" key="2"/>
<name>RL21_LAWIP</name>
<protein>
    <recommendedName>
        <fullName evidence="1">Large ribosomal subunit protein bL21</fullName>
    </recommendedName>
    <alternativeName>
        <fullName evidence="2">50S ribosomal protein L21</fullName>
    </alternativeName>
</protein>
<gene>
    <name evidence="1" type="primary">rplU</name>
    <name type="ordered locus">LI0623</name>
</gene>
<reference key="1">
    <citation type="submission" date="2005-11" db="EMBL/GenBank/DDBJ databases">
        <title>The complete genome sequence of Lawsonia intracellularis: the causative agent of proliferative enteropathy.</title>
        <authorList>
            <person name="Kaur K."/>
            <person name="Zhang Q."/>
            <person name="Beckler D."/>
            <person name="Munir S."/>
            <person name="Li L."/>
            <person name="Kinsley K."/>
            <person name="Herron L."/>
            <person name="Peterson A."/>
            <person name="May B."/>
            <person name="Singh S."/>
            <person name="Gebhart C."/>
            <person name="Kapur V."/>
        </authorList>
    </citation>
    <scope>NUCLEOTIDE SEQUENCE [LARGE SCALE GENOMIC DNA]</scope>
    <source>
        <strain>PHE/MN1-00</strain>
    </source>
</reference>
<keyword id="KW-1185">Reference proteome</keyword>
<keyword id="KW-0687">Ribonucleoprotein</keyword>
<keyword id="KW-0689">Ribosomal protein</keyword>
<keyword id="KW-0694">RNA-binding</keyword>
<keyword id="KW-0699">rRNA-binding</keyword>
<organism>
    <name type="scientific">Lawsonia intracellularis (strain PHE/MN1-00)</name>
    <dbReference type="NCBI Taxonomy" id="363253"/>
    <lineage>
        <taxon>Bacteria</taxon>
        <taxon>Pseudomonadati</taxon>
        <taxon>Thermodesulfobacteriota</taxon>
        <taxon>Desulfovibrionia</taxon>
        <taxon>Desulfovibrionales</taxon>
        <taxon>Desulfovibrionaceae</taxon>
        <taxon>Lawsonia</taxon>
    </lineage>
</organism>
<accession>Q1MQQ0</accession>
<proteinExistence type="inferred from homology"/>